<proteinExistence type="inferred from homology"/>
<dbReference type="EC" id="3.2.2.23" evidence="2"/>
<dbReference type="EC" id="4.2.99.18" evidence="2"/>
<dbReference type="EMBL" id="CP001227">
    <property type="protein sequence ID" value="ACR47801.1"/>
    <property type="molecule type" value="Genomic_DNA"/>
</dbReference>
<dbReference type="RefSeq" id="WP_012736969.1">
    <property type="nucleotide sequence ID" value="NC_012730.1"/>
</dbReference>
<dbReference type="SMR" id="C4K2K4"/>
<dbReference type="KEGG" id="rpk:RPR_06420"/>
<dbReference type="HOGENOM" id="CLU_038423_1_1_5"/>
<dbReference type="Proteomes" id="UP000005015">
    <property type="component" value="Chromosome"/>
</dbReference>
<dbReference type="GO" id="GO:0034039">
    <property type="term" value="F:8-oxo-7,8-dihydroguanine DNA N-glycosylase activity"/>
    <property type="evidence" value="ECO:0007669"/>
    <property type="project" value="TreeGrafter"/>
</dbReference>
<dbReference type="GO" id="GO:0140078">
    <property type="term" value="F:class I DNA-(apurinic or apyrimidinic site) endonuclease activity"/>
    <property type="evidence" value="ECO:0007669"/>
    <property type="project" value="UniProtKB-EC"/>
</dbReference>
<dbReference type="GO" id="GO:0003684">
    <property type="term" value="F:damaged DNA binding"/>
    <property type="evidence" value="ECO:0007669"/>
    <property type="project" value="InterPro"/>
</dbReference>
<dbReference type="GO" id="GO:0008270">
    <property type="term" value="F:zinc ion binding"/>
    <property type="evidence" value="ECO:0007669"/>
    <property type="project" value="UniProtKB-UniRule"/>
</dbReference>
<dbReference type="GO" id="GO:0006284">
    <property type="term" value="P:base-excision repair"/>
    <property type="evidence" value="ECO:0007669"/>
    <property type="project" value="InterPro"/>
</dbReference>
<dbReference type="CDD" id="cd08966">
    <property type="entry name" value="EcFpg-like_N"/>
    <property type="match status" value="1"/>
</dbReference>
<dbReference type="FunFam" id="1.10.8.50:FF:000003">
    <property type="entry name" value="Formamidopyrimidine-DNA glycosylase"/>
    <property type="match status" value="1"/>
</dbReference>
<dbReference type="Gene3D" id="1.10.8.50">
    <property type="match status" value="1"/>
</dbReference>
<dbReference type="Gene3D" id="3.20.190.10">
    <property type="entry name" value="MutM-like, N-terminal"/>
    <property type="match status" value="1"/>
</dbReference>
<dbReference type="HAMAP" id="MF_00103">
    <property type="entry name" value="Fapy_DNA_glycosyl"/>
    <property type="match status" value="1"/>
</dbReference>
<dbReference type="InterPro" id="IPR015886">
    <property type="entry name" value="DNA_glyclase/AP_lyase_DNA-bd"/>
</dbReference>
<dbReference type="InterPro" id="IPR015887">
    <property type="entry name" value="DNA_glyclase_Znf_dom_DNA_BS"/>
</dbReference>
<dbReference type="InterPro" id="IPR020629">
    <property type="entry name" value="Formamido-pyr_DNA_Glyclase"/>
</dbReference>
<dbReference type="InterPro" id="IPR012319">
    <property type="entry name" value="FPG_cat"/>
</dbReference>
<dbReference type="InterPro" id="IPR035937">
    <property type="entry name" value="MutM-like_N-ter"/>
</dbReference>
<dbReference type="InterPro" id="IPR010979">
    <property type="entry name" value="Ribosomal_uS13-like_H2TH"/>
</dbReference>
<dbReference type="InterPro" id="IPR000214">
    <property type="entry name" value="Znf_DNA_glyclase/AP_lyase"/>
</dbReference>
<dbReference type="InterPro" id="IPR010663">
    <property type="entry name" value="Znf_FPG/IleRS"/>
</dbReference>
<dbReference type="NCBIfam" id="TIGR00577">
    <property type="entry name" value="fpg"/>
    <property type="match status" value="1"/>
</dbReference>
<dbReference type="NCBIfam" id="NF002211">
    <property type="entry name" value="PRK01103.1"/>
    <property type="match status" value="1"/>
</dbReference>
<dbReference type="PANTHER" id="PTHR22993">
    <property type="entry name" value="FORMAMIDOPYRIMIDINE-DNA GLYCOSYLASE"/>
    <property type="match status" value="1"/>
</dbReference>
<dbReference type="PANTHER" id="PTHR22993:SF9">
    <property type="entry name" value="FORMAMIDOPYRIMIDINE-DNA GLYCOSYLASE"/>
    <property type="match status" value="1"/>
</dbReference>
<dbReference type="Pfam" id="PF01149">
    <property type="entry name" value="Fapy_DNA_glyco"/>
    <property type="match status" value="1"/>
</dbReference>
<dbReference type="Pfam" id="PF06831">
    <property type="entry name" value="H2TH"/>
    <property type="match status" value="1"/>
</dbReference>
<dbReference type="Pfam" id="PF06827">
    <property type="entry name" value="zf-FPG_IleRS"/>
    <property type="match status" value="1"/>
</dbReference>
<dbReference type="SMART" id="SM00898">
    <property type="entry name" value="Fapy_DNA_glyco"/>
    <property type="match status" value="1"/>
</dbReference>
<dbReference type="SMART" id="SM01232">
    <property type="entry name" value="H2TH"/>
    <property type="match status" value="1"/>
</dbReference>
<dbReference type="SUPFAM" id="SSF57716">
    <property type="entry name" value="Glucocorticoid receptor-like (DNA-binding domain)"/>
    <property type="match status" value="1"/>
</dbReference>
<dbReference type="SUPFAM" id="SSF81624">
    <property type="entry name" value="N-terminal domain of MutM-like DNA repair proteins"/>
    <property type="match status" value="1"/>
</dbReference>
<dbReference type="SUPFAM" id="SSF46946">
    <property type="entry name" value="S13-like H2TH domain"/>
    <property type="match status" value="1"/>
</dbReference>
<dbReference type="PROSITE" id="PS51068">
    <property type="entry name" value="FPG_CAT"/>
    <property type="match status" value="1"/>
</dbReference>
<dbReference type="PROSITE" id="PS01242">
    <property type="entry name" value="ZF_FPG_1"/>
    <property type="match status" value="1"/>
</dbReference>
<dbReference type="PROSITE" id="PS51066">
    <property type="entry name" value="ZF_FPG_2"/>
    <property type="match status" value="1"/>
</dbReference>
<comment type="function">
    <text evidence="2">Involved in base excision repair of DNA damaged by oxidation or by mutagenic agents. Acts as a DNA glycosylase that recognizes and removes damaged bases. Has a preference for oxidized purines, such as 7,8-dihydro-8-oxoguanine (8-oxoG). Has AP (apurinic/apyrimidinic) lyase activity and introduces nicks in the DNA strand. Cleaves the DNA backbone by beta-delta elimination to generate a single-strand break at the site of the removed base with both 3'- and 5'-phosphates.</text>
</comment>
<comment type="catalytic activity">
    <reaction evidence="2">
        <text>Hydrolysis of DNA containing ring-opened 7-methylguanine residues, releasing 2,6-diamino-4-hydroxy-5-(N-methyl)formamidopyrimidine.</text>
        <dbReference type="EC" id="3.2.2.23"/>
    </reaction>
</comment>
<comment type="catalytic activity">
    <reaction evidence="2">
        <text>2'-deoxyribonucleotide-(2'-deoxyribose 5'-phosphate)-2'-deoxyribonucleotide-DNA = a 3'-end 2'-deoxyribonucleotide-(2,3-dehydro-2,3-deoxyribose 5'-phosphate)-DNA + a 5'-end 5'-phospho-2'-deoxyribonucleoside-DNA + H(+)</text>
        <dbReference type="Rhea" id="RHEA:66592"/>
        <dbReference type="Rhea" id="RHEA-COMP:13180"/>
        <dbReference type="Rhea" id="RHEA-COMP:16897"/>
        <dbReference type="Rhea" id="RHEA-COMP:17067"/>
        <dbReference type="ChEBI" id="CHEBI:15378"/>
        <dbReference type="ChEBI" id="CHEBI:136412"/>
        <dbReference type="ChEBI" id="CHEBI:157695"/>
        <dbReference type="ChEBI" id="CHEBI:167181"/>
        <dbReference type="EC" id="4.2.99.18"/>
    </reaction>
</comment>
<comment type="cofactor">
    <cofactor evidence="2">
        <name>Zn(2+)</name>
        <dbReference type="ChEBI" id="CHEBI:29105"/>
    </cofactor>
    <text evidence="2">Binds 1 zinc ion per subunit.</text>
</comment>
<comment type="subunit">
    <text evidence="2">Monomer.</text>
</comment>
<comment type="similarity">
    <text evidence="2">Belongs to the FPG family.</text>
</comment>
<feature type="initiator methionine" description="Removed" evidence="1">
    <location>
        <position position="1"/>
    </location>
</feature>
<feature type="chain" id="PRO_1000202830" description="Formamidopyrimidine-DNA glycosylase">
    <location>
        <begin position="2"/>
        <end position="273"/>
    </location>
</feature>
<feature type="zinc finger region" description="FPG-type" evidence="2">
    <location>
        <begin position="238"/>
        <end position="272"/>
    </location>
</feature>
<feature type="active site" description="Schiff-base intermediate with DNA" evidence="2">
    <location>
        <position position="2"/>
    </location>
</feature>
<feature type="active site" description="Proton donor" evidence="2">
    <location>
        <position position="3"/>
    </location>
</feature>
<feature type="active site" description="Proton donor; for beta-elimination activity" evidence="2">
    <location>
        <position position="58"/>
    </location>
</feature>
<feature type="active site" description="Proton donor; for delta-elimination activity" evidence="2">
    <location>
        <position position="262"/>
    </location>
</feature>
<feature type="binding site" evidence="2">
    <location>
        <position position="92"/>
    </location>
    <ligand>
        <name>DNA</name>
        <dbReference type="ChEBI" id="CHEBI:16991"/>
    </ligand>
</feature>
<feature type="binding site" evidence="2">
    <location>
        <position position="111"/>
    </location>
    <ligand>
        <name>DNA</name>
        <dbReference type="ChEBI" id="CHEBI:16991"/>
    </ligand>
</feature>
<feature type="binding site" evidence="2">
    <location>
        <position position="153"/>
    </location>
    <ligand>
        <name>DNA</name>
        <dbReference type="ChEBI" id="CHEBI:16991"/>
    </ligand>
</feature>
<reference key="1">
    <citation type="journal article" date="2009" name="PLoS ONE">
        <title>Genome sequence of the endosymbiont Rickettsia peacockii and comparison with virulent Rickettsia rickettsii: identification of virulence factors.</title>
        <authorList>
            <person name="Felsheim R.F."/>
            <person name="Kurtti T.J."/>
            <person name="Munderloh U.G."/>
        </authorList>
    </citation>
    <scope>NUCLEOTIDE SEQUENCE [LARGE SCALE GENOMIC DNA]</scope>
    <source>
        <strain>Rustic</strain>
    </source>
</reference>
<gene>
    <name evidence="2" type="primary">mutM</name>
    <name evidence="2" type="synonym">fpg</name>
    <name type="ordered locus">RPR_06420</name>
</gene>
<name>FPG_RICPU</name>
<accession>C4K2K4</accession>
<protein>
    <recommendedName>
        <fullName evidence="2">Formamidopyrimidine-DNA glycosylase</fullName>
        <shortName evidence="2">Fapy-DNA glycosylase</shortName>
        <ecNumber evidence="2">3.2.2.23</ecNumber>
    </recommendedName>
    <alternativeName>
        <fullName evidence="2">DNA-(apurinic or apyrimidinic site) lyase MutM</fullName>
        <shortName evidence="2">AP lyase MutM</shortName>
        <ecNumber evidence="2">4.2.99.18</ecNumber>
    </alternativeName>
</protein>
<organism>
    <name type="scientific">Rickettsia peacockii (strain Rustic)</name>
    <dbReference type="NCBI Taxonomy" id="562019"/>
    <lineage>
        <taxon>Bacteria</taxon>
        <taxon>Pseudomonadati</taxon>
        <taxon>Pseudomonadota</taxon>
        <taxon>Alphaproteobacteria</taxon>
        <taxon>Rickettsiales</taxon>
        <taxon>Rickettsiaceae</taxon>
        <taxon>Rickettsieae</taxon>
        <taxon>Rickettsia</taxon>
        <taxon>spotted fever group</taxon>
    </lineage>
</organism>
<sequence length="273" mass="31274">MPELPEVETLKNSLKDKLIGLIIENVELKRDNLRYKLSPLLATEILNTNILDVRRRAKYLIIDFNNDYSLIVHLGMNGRFTLQSANYKTQKHDHVIFDLSNGEKLIFNDTRRFGMIYSFKTDLLEKEFFNDLGIEPFSDLLTLEYLKDKLQTKKIPIKNLIMDNRVIVGVGNIYASESLHLARIHPDKSGNDLRDDEIENLIKAIRDVLTKAITAGGTTLKDFVNGDNKPGYFTKQLKVYGREGQSCLSCSSTIIKIKHSGRSTFYCKTCQYS</sequence>
<keyword id="KW-0227">DNA damage</keyword>
<keyword id="KW-0234">DNA repair</keyword>
<keyword id="KW-0238">DNA-binding</keyword>
<keyword id="KW-0326">Glycosidase</keyword>
<keyword id="KW-0378">Hydrolase</keyword>
<keyword id="KW-0456">Lyase</keyword>
<keyword id="KW-0479">Metal-binding</keyword>
<keyword id="KW-0511">Multifunctional enzyme</keyword>
<keyword id="KW-0862">Zinc</keyword>
<keyword id="KW-0863">Zinc-finger</keyword>
<evidence type="ECO:0000250" key="1"/>
<evidence type="ECO:0000255" key="2">
    <source>
        <dbReference type="HAMAP-Rule" id="MF_00103"/>
    </source>
</evidence>